<keyword id="KW-0997">Cell inner membrane</keyword>
<keyword id="KW-1003">Cell membrane</keyword>
<keyword id="KW-0472">Membrane</keyword>
<keyword id="KW-0520">NAD</keyword>
<keyword id="KW-0874">Quinone</keyword>
<keyword id="KW-1278">Translocase</keyword>
<keyword id="KW-0813">Transport</keyword>
<keyword id="KW-0830">Ubiquinone</keyword>
<comment type="function">
    <text evidence="1">NDH-1 shuttles electrons from NADH, via FMN and iron-sulfur (Fe-S) centers, to quinones in the respiratory chain. The immediate electron acceptor for the enzyme in this species is believed to be ubiquinone. Couples the redox reaction to proton translocation (for every two electrons transferred, four hydrogen ions are translocated across the cytoplasmic membrane), and thus conserves the redox energy in a proton gradient.</text>
</comment>
<comment type="catalytic activity">
    <reaction evidence="1">
        <text>a quinone + NADH + 5 H(+)(in) = a quinol + NAD(+) + 4 H(+)(out)</text>
        <dbReference type="Rhea" id="RHEA:57888"/>
        <dbReference type="ChEBI" id="CHEBI:15378"/>
        <dbReference type="ChEBI" id="CHEBI:24646"/>
        <dbReference type="ChEBI" id="CHEBI:57540"/>
        <dbReference type="ChEBI" id="CHEBI:57945"/>
        <dbReference type="ChEBI" id="CHEBI:132124"/>
    </reaction>
</comment>
<comment type="subunit">
    <text evidence="1">NDH-1 is composed of 14 different subunits. Subunits NuoB, C, D, E, F, and G constitute the peripheral sector of the complex.</text>
</comment>
<comment type="subcellular location">
    <subcellularLocation>
        <location evidence="1">Cell inner membrane</location>
        <topology evidence="1">Peripheral membrane protein</topology>
        <orientation evidence="1">Cytoplasmic side</orientation>
    </subcellularLocation>
</comment>
<comment type="similarity">
    <text evidence="1">Belongs to the complex I 30 kDa subunit family.</text>
</comment>
<proteinExistence type="inferred from homology"/>
<organism>
    <name type="scientific">Burkholderia mallei (strain NCTC 10229)</name>
    <dbReference type="NCBI Taxonomy" id="412022"/>
    <lineage>
        <taxon>Bacteria</taxon>
        <taxon>Pseudomonadati</taxon>
        <taxon>Pseudomonadota</taxon>
        <taxon>Betaproteobacteria</taxon>
        <taxon>Burkholderiales</taxon>
        <taxon>Burkholderiaceae</taxon>
        <taxon>Burkholderia</taxon>
        <taxon>pseudomallei group</taxon>
    </lineage>
</organism>
<evidence type="ECO:0000255" key="1">
    <source>
        <dbReference type="HAMAP-Rule" id="MF_01357"/>
    </source>
</evidence>
<sequence length="200" mass="22765">MASKIETLKANLEAALGARAVSLVEAVGELTLVVKASDYLEVAKQLRDDRSLGFEQLIDLCGVDYQTYGDGAYDGPRFAAVLHLLSVANNWRLRVRVFASDDDLPIVPSVVDIWNSANWYEREAFDLYGIVFEGHPDLRRILTDYGFIGHPFRKDFPVSGYVEMRYDPQEKRVVYQPVTIEPREITPRVIREDRYGGLKH</sequence>
<gene>
    <name evidence="1" type="primary">nuoC</name>
    <name type="ordered locus">BMA10229_A0735</name>
</gene>
<name>NUOC_BURM9</name>
<feature type="chain" id="PRO_0000358065" description="NADH-quinone oxidoreductase subunit C">
    <location>
        <begin position="1"/>
        <end position="200"/>
    </location>
</feature>
<dbReference type="EC" id="7.1.1.-" evidence="1"/>
<dbReference type="EMBL" id="CP000546">
    <property type="protein sequence ID" value="ABN01797.1"/>
    <property type="molecule type" value="Genomic_DNA"/>
</dbReference>
<dbReference type="RefSeq" id="WP_004186121.1">
    <property type="nucleotide sequence ID" value="NC_008836.1"/>
</dbReference>
<dbReference type="SMR" id="A2S457"/>
<dbReference type="KEGG" id="bml:BMA10229_A0735"/>
<dbReference type="HOGENOM" id="CLU_042628_2_1_4"/>
<dbReference type="Proteomes" id="UP000002283">
    <property type="component" value="Chromosome I"/>
</dbReference>
<dbReference type="GO" id="GO:0005886">
    <property type="term" value="C:plasma membrane"/>
    <property type="evidence" value="ECO:0007669"/>
    <property type="project" value="UniProtKB-SubCell"/>
</dbReference>
<dbReference type="GO" id="GO:0008137">
    <property type="term" value="F:NADH dehydrogenase (ubiquinone) activity"/>
    <property type="evidence" value="ECO:0007669"/>
    <property type="project" value="InterPro"/>
</dbReference>
<dbReference type="GO" id="GO:0050136">
    <property type="term" value="F:NADH:ubiquinone reductase (non-electrogenic) activity"/>
    <property type="evidence" value="ECO:0007669"/>
    <property type="project" value="UniProtKB-UniRule"/>
</dbReference>
<dbReference type="GO" id="GO:0048038">
    <property type="term" value="F:quinone binding"/>
    <property type="evidence" value="ECO:0007669"/>
    <property type="project" value="UniProtKB-KW"/>
</dbReference>
<dbReference type="Gene3D" id="3.30.460.80">
    <property type="entry name" value="NADH:ubiquinone oxidoreductase, 30kDa subunit"/>
    <property type="match status" value="1"/>
</dbReference>
<dbReference type="HAMAP" id="MF_01357">
    <property type="entry name" value="NDH1_NuoC"/>
    <property type="match status" value="1"/>
</dbReference>
<dbReference type="InterPro" id="IPR010218">
    <property type="entry name" value="NADH_DH_suC"/>
</dbReference>
<dbReference type="InterPro" id="IPR037232">
    <property type="entry name" value="NADH_quin_OxRdtase_su_C/D-like"/>
</dbReference>
<dbReference type="InterPro" id="IPR001268">
    <property type="entry name" value="NADH_UbQ_OxRdtase_30kDa_su"/>
</dbReference>
<dbReference type="InterPro" id="IPR020396">
    <property type="entry name" value="NADH_UbQ_OxRdtase_CS"/>
</dbReference>
<dbReference type="NCBIfam" id="TIGR01961">
    <property type="entry name" value="NuoC_fam"/>
    <property type="match status" value="1"/>
</dbReference>
<dbReference type="NCBIfam" id="NF004730">
    <property type="entry name" value="PRK06074.1-1"/>
    <property type="match status" value="1"/>
</dbReference>
<dbReference type="PANTHER" id="PTHR10884:SF14">
    <property type="entry name" value="NADH DEHYDROGENASE [UBIQUINONE] IRON-SULFUR PROTEIN 3, MITOCHONDRIAL"/>
    <property type="match status" value="1"/>
</dbReference>
<dbReference type="PANTHER" id="PTHR10884">
    <property type="entry name" value="NADH DEHYDROGENASE UBIQUINONE IRON-SULFUR PROTEIN 3"/>
    <property type="match status" value="1"/>
</dbReference>
<dbReference type="Pfam" id="PF00329">
    <property type="entry name" value="Complex1_30kDa"/>
    <property type="match status" value="1"/>
</dbReference>
<dbReference type="SUPFAM" id="SSF143243">
    <property type="entry name" value="Nqo5-like"/>
    <property type="match status" value="1"/>
</dbReference>
<dbReference type="PROSITE" id="PS00542">
    <property type="entry name" value="COMPLEX1_30K"/>
    <property type="match status" value="1"/>
</dbReference>
<reference key="1">
    <citation type="journal article" date="2010" name="Genome Biol. Evol.">
        <title>Continuing evolution of Burkholderia mallei through genome reduction and large-scale rearrangements.</title>
        <authorList>
            <person name="Losada L."/>
            <person name="Ronning C.M."/>
            <person name="DeShazer D."/>
            <person name="Woods D."/>
            <person name="Fedorova N."/>
            <person name="Kim H.S."/>
            <person name="Shabalina S.A."/>
            <person name="Pearson T.R."/>
            <person name="Brinkac L."/>
            <person name="Tan P."/>
            <person name="Nandi T."/>
            <person name="Crabtree J."/>
            <person name="Badger J."/>
            <person name="Beckstrom-Sternberg S."/>
            <person name="Saqib M."/>
            <person name="Schutzer S.E."/>
            <person name="Keim P."/>
            <person name="Nierman W.C."/>
        </authorList>
    </citation>
    <scope>NUCLEOTIDE SEQUENCE [LARGE SCALE GENOMIC DNA]</scope>
    <source>
        <strain>NCTC 10229</strain>
    </source>
</reference>
<accession>A2S457</accession>
<protein>
    <recommendedName>
        <fullName evidence="1">NADH-quinone oxidoreductase subunit C</fullName>
        <ecNumber evidence="1">7.1.1.-</ecNumber>
    </recommendedName>
    <alternativeName>
        <fullName evidence="1">NADH dehydrogenase I subunit C</fullName>
    </alternativeName>
    <alternativeName>
        <fullName evidence="1">NDH-1 subunit C</fullName>
    </alternativeName>
</protein>